<feature type="chain" id="PRO_0000285015" description="Ribosomal RNA small subunit methyltransferase F">
    <location>
        <begin position="1"/>
        <end position="482"/>
    </location>
</feature>
<feature type="active site" description="Nucleophile" evidence="1">
    <location>
        <position position="241"/>
    </location>
</feature>
<feature type="binding site" evidence="1">
    <location>
        <begin position="119"/>
        <end position="125"/>
    </location>
    <ligand>
        <name>S-adenosyl-L-methionine</name>
        <dbReference type="ChEBI" id="CHEBI:59789"/>
    </ligand>
</feature>
<feature type="binding site" evidence="1">
    <location>
        <position position="143"/>
    </location>
    <ligand>
        <name>S-adenosyl-L-methionine</name>
        <dbReference type="ChEBI" id="CHEBI:59789"/>
    </ligand>
</feature>
<feature type="binding site" evidence="1">
    <location>
        <position position="170"/>
    </location>
    <ligand>
        <name>S-adenosyl-L-methionine</name>
        <dbReference type="ChEBI" id="CHEBI:59789"/>
    </ligand>
</feature>
<feature type="binding site" evidence="1">
    <location>
        <position position="188"/>
    </location>
    <ligand>
        <name>S-adenosyl-L-methionine</name>
        <dbReference type="ChEBI" id="CHEBI:59789"/>
    </ligand>
</feature>
<sequence length="482" mass="53447">MVQLNQNFINTIAQELPAHLSMDDFIAACSRPLRRSIRVNTLKISSEDFKQLMLPKGWTFEPIPWCEDGFWISYDEEEQLGNALEHIQGLFYIQEASSMLPPTALFTPNADWQCVLDLASAPGSKTTQMAALMNNQGLLVANEYSASRVKVLHANVLRMGASHCALTHFDGRVFGEYLYESFDAVLIDAPCGGEGTVRKDADALKSWSLDEVLEISETQKALIESAFLALKPGGSLVYSTCTLNRHENQGVCEYLQQTYGDAVQFESLSQLFDGAEKATTPEGFLHVWPQIYDSEGFFVAKLTKTRSVPRLQPEPKLQKNFPFTEASAKQAKAIQAYFADDLGIKLPDDLIMVRDDEFWLFPHEFRDFIGKMRFQRIGVKLADHSKHGFKVRHEAIIALAGKALTAGAANGAKVVDVSDEQAKEYLMGRDIPLDTAGKAQGEVIVCYGGAPLGMAKHLGNKLKNSLPRDLVKDKVLLLPPQA</sequence>
<comment type="function">
    <text evidence="1">Specifically methylates the cytosine at position 1407 (m5C1407) of 16S rRNA.</text>
</comment>
<comment type="catalytic activity">
    <reaction evidence="1">
        <text>cytidine(1407) in 16S rRNA + S-adenosyl-L-methionine = 5-methylcytidine(1407) in 16S rRNA + S-adenosyl-L-homocysteine + H(+)</text>
        <dbReference type="Rhea" id="RHEA:42756"/>
        <dbReference type="Rhea" id="RHEA-COMP:10223"/>
        <dbReference type="Rhea" id="RHEA-COMP:10224"/>
        <dbReference type="ChEBI" id="CHEBI:15378"/>
        <dbReference type="ChEBI" id="CHEBI:57856"/>
        <dbReference type="ChEBI" id="CHEBI:59789"/>
        <dbReference type="ChEBI" id="CHEBI:74483"/>
        <dbReference type="ChEBI" id="CHEBI:82748"/>
        <dbReference type="EC" id="2.1.1.178"/>
    </reaction>
</comment>
<comment type="subcellular location">
    <subcellularLocation>
        <location evidence="1">Cytoplasm</location>
    </subcellularLocation>
</comment>
<comment type="similarity">
    <text evidence="1">Belongs to the class I-like SAM-binding methyltransferase superfamily. RsmB/NOP family.</text>
</comment>
<comment type="sequence caution" evidence="2">
    <conflict type="erroneous initiation">
        <sequence resource="EMBL-CDS" id="ABI42733"/>
    </conflict>
</comment>
<organism>
    <name type="scientific">Shewanella sp. (strain MR-7)</name>
    <dbReference type="NCBI Taxonomy" id="60481"/>
    <lineage>
        <taxon>Bacteria</taxon>
        <taxon>Pseudomonadati</taxon>
        <taxon>Pseudomonadota</taxon>
        <taxon>Gammaproteobacteria</taxon>
        <taxon>Alteromonadales</taxon>
        <taxon>Shewanellaceae</taxon>
        <taxon>Shewanella</taxon>
    </lineage>
</organism>
<accession>Q0HVX2</accession>
<proteinExistence type="inferred from homology"/>
<reference key="1">
    <citation type="submission" date="2006-08" db="EMBL/GenBank/DDBJ databases">
        <title>Complete sequence of chromosome 1 of Shewanella sp. MR-7.</title>
        <authorList>
            <person name="Copeland A."/>
            <person name="Lucas S."/>
            <person name="Lapidus A."/>
            <person name="Barry K."/>
            <person name="Detter J.C."/>
            <person name="Glavina del Rio T."/>
            <person name="Hammon N."/>
            <person name="Israni S."/>
            <person name="Dalin E."/>
            <person name="Tice H."/>
            <person name="Pitluck S."/>
            <person name="Kiss H."/>
            <person name="Brettin T."/>
            <person name="Bruce D."/>
            <person name="Han C."/>
            <person name="Tapia R."/>
            <person name="Gilna P."/>
            <person name="Schmutz J."/>
            <person name="Larimer F."/>
            <person name="Land M."/>
            <person name="Hauser L."/>
            <person name="Kyrpides N."/>
            <person name="Mikhailova N."/>
            <person name="Nealson K."/>
            <person name="Konstantinidis K."/>
            <person name="Klappenbach J."/>
            <person name="Tiedje J."/>
            <person name="Richardson P."/>
        </authorList>
    </citation>
    <scope>NUCLEOTIDE SEQUENCE [LARGE SCALE GENOMIC DNA]</scope>
    <source>
        <strain>MR-7</strain>
    </source>
</reference>
<protein>
    <recommendedName>
        <fullName evidence="1">Ribosomal RNA small subunit methyltransferase F</fullName>
        <ecNumber evidence="1">2.1.1.178</ecNumber>
    </recommendedName>
    <alternativeName>
        <fullName evidence="1">16S rRNA m5C1407 methyltransferase</fullName>
    </alternativeName>
    <alternativeName>
        <fullName evidence="1">rRNA (cytosine-C(5)-)-methyltransferase RsmF</fullName>
    </alternativeName>
</protein>
<keyword id="KW-0963">Cytoplasm</keyword>
<keyword id="KW-0489">Methyltransferase</keyword>
<keyword id="KW-0694">RNA-binding</keyword>
<keyword id="KW-0698">rRNA processing</keyword>
<keyword id="KW-0949">S-adenosyl-L-methionine</keyword>
<keyword id="KW-0808">Transferase</keyword>
<gene>
    <name evidence="1" type="primary">rsmF</name>
    <name type="ordered locus">Shewmr7_1740</name>
</gene>
<dbReference type="EC" id="2.1.1.178" evidence="1"/>
<dbReference type="EMBL" id="CP000444">
    <property type="protein sequence ID" value="ABI42733.1"/>
    <property type="status" value="ALT_INIT"/>
    <property type="molecule type" value="Genomic_DNA"/>
</dbReference>
<dbReference type="SMR" id="Q0HVX2"/>
<dbReference type="KEGG" id="shm:Shewmr7_1740"/>
<dbReference type="HOGENOM" id="CLU_005316_6_2_6"/>
<dbReference type="GO" id="GO:0005737">
    <property type="term" value="C:cytoplasm"/>
    <property type="evidence" value="ECO:0007669"/>
    <property type="project" value="UniProtKB-SubCell"/>
</dbReference>
<dbReference type="GO" id="GO:0003723">
    <property type="term" value="F:RNA binding"/>
    <property type="evidence" value="ECO:0007669"/>
    <property type="project" value="UniProtKB-KW"/>
</dbReference>
<dbReference type="GO" id="GO:0009383">
    <property type="term" value="F:rRNA (cytosine-C5-)-methyltransferase activity"/>
    <property type="evidence" value="ECO:0007669"/>
    <property type="project" value="TreeGrafter"/>
</dbReference>
<dbReference type="GO" id="GO:0070475">
    <property type="term" value="P:rRNA base methylation"/>
    <property type="evidence" value="ECO:0007669"/>
    <property type="project" value="TreeGrafter"/>
</dbReference>
<dbReference type="CDD" id="cd02440">
    <property type="entry name" value="AdoMet_MTases"/>
    <property type="match status" value="1"/>
</dbReference>
<dbReference type="FunFam" id="3.40.50.150:FF:000079">
    <property type="entry name" value="Ribosomal RNA small subunit methyltransferase F"/>
    <property type="match status" value="1"/>
</dbReference>
<dbReference type="Gene3D" id="3.10.450.720">
    <property type="match status" value="1"/>
</dbReference>
<dbReference type="Gene3D" id="3.40.50.150">
    <property type="entry name" value="Vaccinia Virus protein VP39"/>
    <property type="match status" value="1"/>
</dbReference>
<dbReference type="HAMAP" id="MF_01579">
    <property type="entry name" value="16SrRNA_methyltr_F"/>
    <property type="match status" value="1"/>
</dbReference>
<dbReference type="InterPro" id="IPR031341">
    <property type="entry name" value="Methyltr_RsmF_N"/>
</dbReference>
<dbReference type="InterPro" id="IPR049560">
    <property type="entry name" value="MeTrfase_RsmB-F_NOP2_cat"/>
</dbReference>
<dbReference type="InterPro" id="IPR001678">
    <property type="entry name" value="MeTrfase_RsmB-F_NOP2_dom"/>
</dbReference>
<dbReference type="InterPro" id="IPR027391">
    <property type="entry name" value="Nol1_Nop2_Fmu_2"/>
</dbReference>
<dbReference type="InterPro" id="IPR011023">
    <property type="entry name" value="Nop2p"/>
</dbReference>
<dbReference type="InterPro" id="IPR023267">
    <property type="entry name" value="RCMT"/>
</dbReference>
<dbReference type="InterPro" id="IPR023545">
    <property type="entry name" value="rRNA_ssu_MeTfrase_F"/>
</dbReference>
<dbReference type="InterPro" id="IPR029063">
    <property type="entry name" value="SAM-dependent_MTases_sf"/>
</dbReference>
<dbReference type="InterPro" id="IPR048457">
    <property type="entry name" value="YebU_pre-PUA_dom"/>
</dbReference>
<dbReference type="NCBIfam" id="TIGR00446">
    <property type="entry name" value="nop2p"/>
    <property type="match status" value="1"/>
</dbReference>
<dbReference type="NCBIfam" id="NF008898">
    <property type="entry name" value="PRK11933.1"/>
    <property type="match status" value="1"/>
</dbReference>
<dbReference type="PANTHER" id="PTHR22807:SF30">
    <property type="entry name" value="28S RRNA (CYTOSINE(4447)-C(5))-METHYLTRANSFERASE-RELATED"/>
    <property type="match status" value="1"/>
</dbReference>
<dbReference type="PANTHER" id="PTHR22807">
    <property type="entry name" value="NOP2 YEAST -RELATED NOL1/NOP2/FMU SUN DOMAIN-CONTAINING"/>
    <property type="match status" value="1"/>
</dbReference>
<dbReference type="Pfam" id="PF01189">
    <property type="entry name" value="Methyltr_RsmB-F"/>
    <property type="match status" value="1"/>
</dbReference>
<dbReference type="Pfam" id="PF17125">
    <property type="entry name" value="Methyltr_RsmF_N"/>
    <property type="match status" value="1"/>
</dbReference>
<dbReference type="Pfam" id="PF13636">
    <property type="entry name" value="Methyltranf_PUA"/>
    <property type="match status" value="1"/>
</dbReference>
<dbReference type="Pfam" id="PF21150">
    <property type="entry name" value="YebU_pre-PUA_dom"/>
    <property type="match status" value="1"/>
</dbReference>
<dbReference type="PRINTS" id="PR02008">
    <property type="entry name" value="RCMTFAMILY"/>
</dbReference>
<dbReference type="SUPFAM" id="SSF53335">
    <property type="entry name" value="S-adenosyl-L-methionine-dependent methyltransferases"/>
    <property type="match status" value="1"/>
</dbReference>
<dbReference type="PROSITE" id="PS51686">
    <property type="entry name" value="SAM_MT_RSMB_NOP"/>
    <property type="match status" value="1"/>
</dbReference>
<evidence type="ECO:0000255" key="1">
    <source>
        <dbReference type="HAMAP-Rule" id="MF_01579"/>
    </source>
</evidence>
<evidence type="ECO:0000305" key="2"/>
<name>RSMF_SHESR</name>